<gene>
    <name evidence="1" type="primary">queC</name>
    <name type="ordered locus">SSPA2109</name>
</gene>
<keyword id="KW-0067">ATP-binding</keyword>
<keyword id="KW-0436">Ligase</keyword>
<keyword id="KW-0479">Metal-binding</keyword>
<keyword id="KW-0547">Nucleotide-binding</keyword>
<keyword id="KW-0671">Queuosine biosynthesis</keyword>
<keyword id="KW-0862">Zinc</keyword>
<dbReference type="EC" id="6.3.4.20" evidence="1"/>
<dbReference type="EMBL" id="FM200053">
    <property type="protein sequence ID" value="CAR60319.1"/>
    <property type="molecule type" value="Genomic_DNA"/>
</dbReference>
<dbReference type="RefSeq" id="WP_000817205.1">
    <property type="nucleotide sequence ID" value="NC_011147.1"/>
</dbReference>
<dbReference type="SMR" id="B5BD76"/>
<dbReference type="KEGG" id="sek:SSPA2109"/>
<dbReference type="HOGENOM" id="CLU_081854_0_0_6"/>
<dbReference type="UniPathway" id="UPA00391"/>
<dbReference type="Proteomes" id="UP000001869">
    <property type="component" value="Chromosome"/>
</dbReference>
<dbReference type="GO" id="GO:0005524">
    <property type="term" value="F:ATP binding"/>
    <property type="evidence" value="ECO:0007669"/>
    <property type="project" value="UniProtKB-UniRule"/>
</dbReference>
<dbReference type="GO" id="GO:0016879">
    <property type="term" value="F:ligase activity, forming carbon-nitrogen bonds"/>
    <property type="evidence" value="ECO:0007669"/>
    <property type="project" value="UniProtKB-UniRule"/>
</dbReference>
<dbReference type="GO" id="GO:0008270">
    <property type="term" value="F:zinc ion binding"/>
    <property type="evidence" value="ECO:0007669"/>
    <property type="project" value="UniProtKB-UniRule"/>
</dbReference>
<dbReference type="GO" id="GO:0008616">
    <property type="term" value="P:queuosine biosynthetic process"/>
    <property type="evidence" value="ECO:0007669"/>
    <property type="project" value="UniProtKB-UniRule"/>
</dbReference>
<dbReference type="CDD" id="cd01995">
    <property type="entry name" value="QueC-like"/>
    <property type="match status" value="1"/>
</dbReference>
<dbReference type="FunFam" id="3.40.50.620:FF:000017">
    <property type="entry name" value="7-cyano-7-deazaguanine synthase"/>
    <property type="match status" value="1"/>
</dbReference>
<dbReference type="Gene3D" id="3.40.50.620">
    <property type="entry name" value="HUPs"/>
    <property type="match status" value="1"/>
</dbReference>
<dbReference type="HAMAP" id="MF_01633">
    <property type="entry name" value="QueC"/>
    <property type="match status" value="1"/>
</dbReference>
<dbReference type="InterPro" id="IPR018317">
    <property type="entry name" value="QueC"/>
</dbReference>
<dbReference type="InterPro" id="IPR014729">
    <property type="entry name" value="Rossmann-like_a/b/a_fold"/>
</dbReference>
<dbReference type="NCBIfam" id="TIGR00364">
    <property type="entry name" value="7-cyano-7-deazaguanine synthase QueC"/>
    <property type="match status" value="1"/>
</dbReference>
<dbReference type="NCBIfam" id="NF008317">
    <property type="entry name" value="PRK11106.1"/>
    <property type="match status" value="1"/>
</dbReference>
<dbReference type="PANTHER" id="PTHR42914">
    <property type="entry name" value="7-CYANO-7-DEAZAGUANINE SYNTHASE"/>
    <property type="match status" value="1"/>
</dbReference>
<dbReference type="PANTHER" id="PTHR42914:SF1">
    <property type="entry name" value="7-CYANO-7-DEAZAGUANINE SYNTHASE"/>
    <property type="match status" value="1"/>
</dbReference>
<dbReference type="Pfam" id="PF06508">
    <property type="entry name" value="QueC"/>
    <property type="match status" value="1"/>
</dbReference>
<dbReference type="PIRSF" id="PIRSF006293">
    <property type="entry name" value="ExsB"/>
    <property type="match status" value="1"/>
</dbReference>
<dbReference type="SUPFAM" id="SSF52402">
    <property type="entry name" value="Adenine nucleotide alpha hydrolases-like"/>
    <property type="match status" value="1"/>
</dbReference>
<name>QUEC_SALPK</name>
<feature type="chain" id="PRO_1000186634" description="7-cyano-7-deazaguanine synthase">
    <location>
        <begin position="1"/>
        <end position="231"/>
    </location>
</feature>
<feature type="binding site" evidence="1">
    <location>
        <begin position="8"/>
        <end position="18"/>
    </location>
    <ligand>
        <name>ATP</name>
        <dbReference type="ChEBI" id="CHEBI:30616"/>
    </ligand>
</feature>
<feature type="binding site" evidence="1">
    <location>
        <position position="188"/>
    </location>
    <ligand>
        <name>Zn(2+)</name>
        <dbReference type="ChEBI" id="CHEBI:29105"/>
    </ligand>
</feature>
<feature type="binding site" evidence="1">
    <location>
        <position position="197"/>
    </location>
    <ligand>
        <name>Zn(2+)</name>
        <dbReference type="ChEBI" id="CHEBI:29105"/>
    </ligand>
</feature>
<feature type="binding site" evidence="1">
    <location>
        <position position="200"/>
    </location>
    <ligand>
        <name>Zn(2+)</name>
        <dbReference type="ChEBI" id="CHEBI:29105"/>
    </ligand>
</feature>
<feature type="binding site" evidence="1">
    <location>
        <position position="203"/>
    </location>
    <ligand>
        <name>Zn(2+)</name>
        <dbReference type="ChEBI" id="CHEBI:29105"/>
    </ligand>
</feature>
<proteinExistence type="inferred from homology"/>
<sequence length="231" mass="25499">MKRAVVVFSGGQDSTTCLAQARHQYDEVHCVTFDYGQRHRAEIDVARALALKLGARAHKVLDVTLLNELAVSSLTRDSIPVPDYEPNADGIPNTFVPGRNILFLTLVAIYAYQVKAEAVITGVCETDFSGYPDCRDEFVKALNHAVNLGMAKDIRFETPLMWIDKAETWALADYWGQLDLVREETLTCYNGIKGDGCGHCAACNLRANGLNHYLSNKSAVMAAMKQKTGLR</sequence>
<organism>
    <name type="scientific">Salmonella paratyphi A (strain AKU_12601)</name>
    <dbReference type="NCBI Taxonomy" id="554290"/>
    <lineage>
        <taxon>Bacteria</taxon>
        <taxon>Pseudomonadati</taxon>
        <taxon>Pseudomonadota</taxon>
        <taxon>Gammaproteobacteria</taxon>
        <taxon>Enterobacterales</taxon>
        <taxon>Enterobacteriaceae</taxon>
        <taxon>Salmonella</taxon>
    </lineage>
</organism>
<reference key="1">
    <citation type="journal article" date="2009" name="BMC Genomics">
        <title>Pseudogene accumulation in the evolutionary histories of Salmonella enterica serovars Paratyphi A and Typhi.</title>
        <authorList>
            <person name="Holt K.E."/>
            <person name="Thomson N.R."/>
            <person name="Wain J."/>
            <person name="Langridge G.C."/>
            <person name="Hasan R."/>
            <person name="Bhutta Z.A."/>
            <person name="Quail M.A."/>
            <person name="Norbertczak H."/>
            <person name="Walker D."/>
            <person name="Simmonds M."/>
            <person name="White B."/>
            <person name="Bason N."/>
            <person name="Mungall K."/>
            <person name="Dougan G."/>
            <person name="Parkhill J."/>
        </authorList>
    </citation>
    <scope>NUCLEOTIDE SEQUENCE [LARGE SCALE GENOMIC DNA]</scope>
    <source>
        <strain>AKU_12601</strain>
    </source>
</reference>
<protein>
    <recommendedName>
        <fullName evidence="1">7-cyano-7-deazaguanine synthase</fullName>
        <ecNumber evidence="1">6.3.4.20</ecNumber>
    </recommendedName>
    <alternativeName>
        <fullName evidence="1">7-cyano-7-carbaguanine synthase</fullName>
    </alternativeName>
    <alternativeName>
        <fullName evidence="1">PreQ(0) synthase</fullName>
    </alternativeName>
    <alternativeName>
        <fullName evidence="1">Queuosine biosynthesis protein QueC</fullName>
    </alternativeName>
</protein>
<accession>B5BD76</accession>
<evidence type="ECO:0000255" key="1">
    <source>
        <dbReference type="HAMAP-Rule" id="MF_01633"/>
    </source>
</evidence>
<comment type="function">
    <text evidence="1">Catalyzes the ATP-dependent conversion of 7-carboxy-7-deazaguanine (CDG) to 7-cyano-7-deazaguanine (preQ(0)).</text>
</comment>
<comment type="catalytic activity">
    <reaction evidence="1">
        <text>7-carboxy-7-deazaguanine + NH4(+) + ATP = 7-cyano-7-deazaguanine + ADP + phosphate + H2O + H(+)</text>
        <dbReference type="Rhea" id="RHEA:27982"/>
        <dbReference type="ChEBI" id="CHEBI:15377"/>
        <dbReference type="ChEBI" id="CHEBI:15378"/>
        <dbReference type="ChEBI" id="CHEBI:28938"/>
        <dbReference type="ChEBI" id="CHEBI:30616"/>
        <dbReference type="ChEBI" id="CHEBI:43474"/>
        <dbReference type="ChEBI" id="CHEBI:45075"/>
        <dbReference type="ChEBI" id="CHEBI:61036"/>
        <dbReference type="ChEBI" id="CHEBI:456216"/>
        <dbReference type="EC" id="6.3.4.20"/>
    </reaction>
</comment>
<comment type="cofactor">
    <cofactor evidence="1">
        <name>Zn(2+)</name>
        <dbReference type="ChEBI" id="CHEBI:29105"/>
    </cofactor>
    <text evidence="1">Binds 1 zinc ion per subunit.</text>
</comment>
<comment type="pathway">
    <text evidence="1">Purine metabolism; 7-cyano-7-deazaguanine biosynthesis.</text>
</comment>
<comment type="similarity">
    <text evidence="1">Belongs to the QueC family.</text>
</comment>